<protein>
    <recommendedName>
        <fullName>Capping protein inhibiting regulator of actin dynamics</fullName>
    </recommendedName>
    <alternativeName>
        <fullName>Cancer-related regulator of actin dynamics homolog</fullName>
    </alternativeName>
</protein>
<feature type="chain" id="PRO_0000342477" description="Capping protein inhibiting regulator of actin dynamics">
    <location>
        <begin position="1"/>
        <end position="1079"/>
    </location>
</feature>
<feature type="region of interest" description="Disordered" evidence="2">
    <location>
        <begin position="1"/>
        <end position="293"/>
    </location>
</feature>
<feature type="region of interest" description="Disordered" evidence="2">
    <location>
        <begin position="308"/>
        <end position="327"/>
    </location>
</feature>
<feature type="region of interest" description="Disordered" evidence="2">
    <location>
        <begin position="341"/>
        <end position="383"/>
    </location>
</feature>
<feature type="region of interest" description="Disordered" evidence="2">
    <location>
        <begin position="420"/>
        <end position="453"/>
    </location>
</feature>
<feature type="region of interest" description="Disordered" evidence="2">
    <location>
        <begin position="493"/>
        <end position="522"/>
    </location>
</feature>
<feature type="region of interest" description="Disordered" evidence="2">
    <location>
        <begin position="606"/>
        <end position="639"/>
    </location>
</feature>
<feature type="region of interest" description="Disordered" evidence="2">
    <location>
        <begin position="658"/>
        <end position="1054"/>
    </location>
</feature>
<feature type="compositionally biased region" description="Basic and acidic residues" evidence="2">
    <location>
        <begin position="1"/>
        <end position="11"/>
    </location>
</feature>
<feature type="compositionally biased region" description="Acidic residues" evidence="2">
    <location>
        <begin position="36"/>
        <end position="45"/>
    </location>
</feature>
<feature type="compositionally biased region" description="Basic and acidic residues" evidence="2">
    <location>
        <begin position="64"/>
        <end position="76"/>
    </location>
</feature>
<feature type="compositionally biased region" description="Basic residues" evidence="2">
    <location>
        <begin position="115"/>
        <end position="134"/>
    </location>
</feature>
<feature type="compositionally biased region" description="Acidic residues" evidence="2">
    <location>
        <begin position="140"/>
        <end position="158"/>
    </location>
</feature>
<feature type="compositionally biased region" description="Basic and acidic residues" evidence="2">
    <location>
        <begin position="159"/>
        <end position="293"/>
    </location>
</feature>
<feature type="compositionally biased region" description="Polar residues" evidence="2">
    <location>
        <begin position="420"/>
        <end position="434"/>
    </location>
</feature>
<feature type="compositionally biased region" description="Polar residues" evidence="2">
    <location>
        <begin position="670"/>
        <end position="682"/>
    </location>
</feature>
<feature type="compositionally biased region" description="Acidic residues" evidence="2">
    <location>
        <begin position="684"/>
        <end position="695"/>
    </location>
</feature>
<feature type="compositionally biased region" description="Polar residues" evidence="2">
    <location>
        <begin position="756"/>
        <end position="781"/>
    </location>
</feature>
<feature type="compositionally biased region" description="Basic and acidic residues" evidence="2">
    <location>
        <begin position="896"/>
        <end position="930"/>
    </location>
</feature>
<feature type="compositionally biased region" description="Basic and acidic residues" evidence="2">
    <location>
        <begin position="944"/>
        <end position="983"/>
    </location>
</feature>
<feature type="compositionally biased region" description="Polar residues" evidence="2">
    <location>
        <begin position="984"/>
        <end position="993"/>
    </location>
</feature>
<feature type="compositionally biased region" description="Basic and acidic residues" evidence="2">
    <location>
        <begin position="994"/>
        <end position="1016"/>
    </location>
</feature>
<feature type="compositionally biased region" description="Polar residues" evidence="2">
    <location>
        <begin position="1020"/>
        <end position="1033"/>
    </location>
</feature>
<name>CRACD_DANRE</name>
<evidence type="ECO:0000250" key="1">
    <source>
        <dbReference type="UniProtKB" id="Q6ZU35"/>
    </source>
</evidence>
<evidence type="ECO:0000256" key="2">
    <source>
        <dbReference type="SAM" id="MobiDB-lite"/>
    </source>
</evidence>
<evidence type="ECO:0000305" key="3"/>
<gene>
    <name type="primary">crad</name>
    <name type="ORF">si:dkeyp-117h8.2</name>
</gene>
<sequence length="1079" mass="123615">MSQENVSDKVRNIQKQIGHNIKFGQRPPSLRKSEGDEGSSDEEEVPQSPLRVLAQVENEPPETSAKEKSVSHDTVQHRTPVKSPRTKRPPPPGTIESINLDAVPQSVPRLDNTAAKHKLSVKPKNQRVSRKHRRFTQEFHEDDFSEIQEEFEKDEEVFDSSREDYGIIHGSKEDYEPTEKSQRQRFHEEEKEHLEIKKREQEEERKMEKHRRMIEEQRLEEEKRRRQEEERLQKVEEERKQREEEERKKREEEERRREEEERRLRHEEERKRQEEEERMKKEEEERKRAEEERRQQELLAERLRLEEERKREQEERRRKEEEEAEKRRIQELQEKRLREEEHRIREEERCRQEEAERKRLEEEERKRQLQEEKAGSTDPEWKRKAEELRWREMEERQRPFTFKVSSGEKQILFQKVNLTPVTPATGQQGETTAETWEGAKASSPGGPDSPTLSSSLYVPHTAILVTGAQLCGTAVNLDQIKDTACKSLLGLSEGKKAMGTPPSKSKTSPDRKSGKTKSVFESSLSTDQSNAAVLAEWASIRSKIFKGAEEGKYPEYTDQSRRPTSEDLNTVPFSHTNLRKTMSASAKFSITPARKKFADSNRNSEIFGQEEGVKTESAFTETSPVQKELPSLGTKVQSRGSKLVRIADEECMFAKDLPSFLVPSPPHGSPKSQRSESGSPIQAESEDSDTKDEDGEQKAQGGDEQPSPFGIKLRRTNYSLRFHNEQSAEKKKKRYSAGDSFEGVPVPLTAIDQDSDNSTLSEKSSPISPQQENIEFQTTVAPSKESRSKFSRSTLPLARTEGDNMSPKPPLYQKPATSPKPSEGATPLLSPLPKPGRRTSGDTISQRTGEAEQVATEQGSDHKGGVTASGPSQKSGQGEEDVKEKKSFFPSISIPWREKTDRRTELIKKEKPSLQARHSLDSSRSQDKETGPLWITLALQKQKGFREQQQNREERRNQREAKLAEKQARDRESAGSSPTEDKGNGSSSIISKHQTADENKRPDTLLARFERRDNLKKANTLPSSVTVEITDSTPSPPATKDVTKRFPPGDTTQVSTEPAWLALAKRKAKAWSDCPQIIK</sequence>
<dbReference type="EMBL" id="CR352243">
    <property type="protein sequence ID" value="CAI21314.2"/>
    <property type="status" value="ALT_INIT"/>
    <property type="molecule type" value="Genomic_DNA"/>
</dbReference>
<dbReference type="RefSeq" id="NP_001334605.1">
    <property type="nucleotide sequence ID" value="NM_001347676.1"/>
</dbReference>
<dbReference type="RefSeq" id="NP_001334607.1">
    <property type="nucleotide sequence ID" value="NM_001347678.1"/>
</dbReference>
<dbReference type="RefSeq" id="XP_009300880.1">
    <property type="nucleotide sequence ID" value="XM_009302605.2"/>
</dbReference>
<dbReference type="FunCoup" id="Q5RG44">
    <property type="interactions" value="1075"/>
</dbReference>
<dbReference type="STRING" id="7955.ENSDARP00000122314"/>
<dbReference type="PaxDb" id="7955-ENSDARP00000122314"/>
<dbReference type="Ensembl" id="ENSDART00000146711">
    <property type="protein sequence ID" value="ENSDARP00000122314"/>
    <property type="gene ID" value="ENSDARG00000011602"/>
</dbReference>
<dbReference type="Ensembl" id="ENSDART00000182775">
    <property type="protein sequence ID" value="ENSDARP00000156539"/>
    <property type="gene ID" value="ENSDARG00000011602"/>
</dbReference>
<dbReference type="GeneID" id="570321"/>
<dbReference type="KEGG" id="dre:570321"/>
<dbReference type="AGR" id="ZFIN:ZDB-GENE-041210-321"/>
<dbReference type="CTD" id="57482"/>
<dbReference type="ZFIN" id="ZDB-GENE-041210-321">
    <property type="gene designation" value="cracd"/>
</dbReference>
<dbReference type="eggNOG" id="ENOG502QQWT">
    <property type="taxonomic scope" value="Eukaryota"/>
</dbReference>
<dbReference type="HOGENOM" id="CLU_008508_0_0_1"/>
<dbReference type="InParanoid" id="Q5RG44"/>
<dbReference type="OMA" id="ECKFAKD"/>
<dbReference type="OrthoDB" id="9905722at2759"/>
<dbReference type="PhylomeDB" id="Q5RG44"/>
<dbReference type="PRO" id="PR:Q5RG44"/>
<dbReference type="Proteomes" id="UP000000437">
    <property type="component" value="Chromosome 20"/>
</dbReference>
<dbReference type="Bgee" id="ENSDARG00000011602">
    <property type="expression patterns" value="Expressed in brain and 15 other cell types or tissues"/>
</dbReference>
<dbReference type="ExpressionAtlas" id="Q5RG44">
    <property type="expression patterns" value="baseline and differential"/>
</dbReference>
<dbReference type="GO" id="GO:0005829">
    <property type="term" value="C:cytosol"/>
    <property type="evidence" value="ECO:0007669"/>
    <property type="project" value="UniProtKB-SubCell"/>
</dbReference>
<dbReference type="GO" id="GO:0010669">
    <property type="term" value="P:epithelial structure maintenance"/>
    <property type="evidence" value="ECO:0000250"/>
    <property type="project" value="UniProtKB"/>
</dbReference>
<dbReference type="GO" id="GO:0030277">
    <property type="term" value="P:maintenance of gastrointestinal epithelium"/>
    <property type="evidence" value="ECO:0000250"/>
    <property type="project" value="UniProtKB"/>
</dbReference>
<dbReference type="GO" id="GO:2000813">
    <property type="term" value="P:negative regulation of barbed-end actin filament capping"/>
    <property type="evidence" value="ECO:0000250"/>
    <property type="project" value="UniProtKB"/>
</dbReference>
<dbReference type="GO" id="GO:0030838">
    <property type="term" value="P:positive regulation of actin filament polymerization"/>
    <property type="evidence" value="ECO:0000250"/>
    <property type="project" value="UniProtKB"/>
</dbReference>
<dbReference type="InterPro" id="IPR052853">
    <property type="entry name" value="Actin_dynamics_regulator"/>
</dbReference>
<dbReference type="InterPro" id="IPR028030">
    <property type="entry name" value="DUF4592"/>
</dbReference>
<dbReference type="PANTHER" id="PTHR47574">
    <property type="entry name" value="CANCER-RELATED REGULATOR OF ACTIN DYNAMICS"/>
    <property type="match status" value="1"/>
</dbReference>
<dbReference type="PANTHER" id="PTHR47574:SF3">
    <property type="entry name" value="CAPPING PROTEIN-INHIBITING REGULATOR OF ACTIN DYNAMICS"/>
    <property type="match status" value="1"/>
</dbReference>
<dbReference type="Pfam" id="PF15262">
    <property type="entry name" value="DUF4592"/>
    <property type="match status" value="1"/>
</dbReference>
<accession>Q5RG44</accession>
<organism>
    <name type="scientific">Danio rerio</name>
    <name type="common">Zebrafish</name>
    <name type="synonym">Brachydanio rerio</name>
    <dbReference type="NCBI Taxonomy" id="7955"/>
    <lineage>
        <taxon>Eukaryota</taxon>
        <taxon>Metazoa</taxon>
        <taxon>Chordata</taxon>
        <taxon>Craniata</taxon>
        <taxon>Vertebrata</taxon>
        <taxon>Euteleostomi</taxon>
        <taxon>Actinopterygii</taxon>
        <taxon>Neopterygii</taxon>
        <taxon>Teleostei</taxon>
        <taxon>Ostariophysi</taxon>
        <taxon>Cypriniformes</taxon>
        <taxon>Danionidae</taxon>
        <taxon>Danioninae</taxon>
        <taxon>Danio</taxon>
    </lineage>
</organism>
<keyword id="KW-0963">Cytoplasm</keyword>
<keyword id="KW-1185">Reference proteome</keyword>
<reference key="1">
    <citation type="journal article" date="2013" name="Nature">
        <title>The zebrafish reference genome sequence and its relationship to the human genome.</title>
        <authorList>
            <person name="Howe K."/>
            <person name="Clark M.D."/>
            <person name="Torroja C.F."/>
            <person name="Torrance J."/>
            <person name="Berthelot C."/>
            <person name="Muffato M."/>
            <person name="Collins J.E."/>
            <person name="Humphray S."/>
            <person name="McLaren K."/>
            <person name="Matthews L."/>
            <person name="McLaren S."/>
            <person name="Sealy I."/>
            <person name="Caccamo M."/>
            <person name="Churcher C."/>
            <person name="Scott C."/>
            <person name="Barrett J.C."/>
            <person name="Koch R."/>
            <person name="Rauch G.J."/>
            <person name="White S."/>
            <person name="Chow W."/>
            <person name="Kilian B."/>
            <person name="Quintais L.T."/>
            <person name="Guerra-Assuncao J.A."/>
            <person name="Zhou Y."/>
            <person name="Gu Y."/>
            <person name="Yen J."/>
            <person name="Vogel J.H."/>
            <person name="Eyre T."/>
            <person name="Redmond S."/>
            <person name="Banerjee R."/>
            <person name="Chi J."/>
            <person name="Fu B."/>
            <person name="Langley E."/>
            <person name="Maguire S.F."/>
            <person name="Laird G.K."/>
            <person name="Lloyd D."/>
            <person name="Kenyon E."/>
            <person name="Donaldson S."/>
            <person name="Sehra H."/>
            <person name="Almeida-King J."/>
            <person name="Loveland J."/>
            <person name="Trevanion S."/>
            <person name="Jones M."/>
            <person name="Quail M."/>
            <person name="Willey D."/>
            <person name="Hunt A."/>
            <person name="Burton J."/>
            <person name="Sims S."/>
            <person name="McLay K."/>
            <person name="Plumb B."/>
            <person name="Davis J."/>
            <person name="Clee C."/>
            <person name="Oliver K."/>
            <person name="Clark R."/>
            <person name="Riddle C."/>
            <person name="Elliot D."/>
            <person name="Threadgold G."/>
            <person name="Harden G."/>
            <person name="Ware D."/>
            <person name="Begum S."/>
            <person name="Mortimore B."/>
            <person name="Kerry G."/>
            <person name="Heath P."/>
            <person name="Phillimore B."/>
            <person name="Tracey A."/>
            <person name="Corby N."/>
            <person name="Dunn M."/>
            <person name="Johnson C."/>
            <person name="Wood J."/>
            <person name="Clark S."/>
            <person name="Pelan S."/>
            <person name="Griffiths G."/>
            <person name="Smith M."/>
            <person name="Glithero R."/>
            <person name="Howden P."/>
            <person name="Barker N."/>
            <person name="Lloyd C."/>
            <person name="Stevens C."/>
            <person name="Harley J."/>
            <person name="Holt K."/>
            <person name="Panagiotidis G."/>
            <person name="Lovell J."/>
            <person name="Beasley H."/>
            <person name="Henderson C."/>
            <person name="Gordon D."/>
            <person name="Auger K."/>
            <person name="Wright D."/>
            <person name="Collins J."/>
            <person name="Raisen C."/>
            <person name="Dyer L."/>
            <person name="Leung K."/>
            <person name="Robertson L."/>
            <person name="Ambridge K."/>
            <person name="Leongamornlert D."/>
            <person name="McGuire S."/>
            <person name="Gilderthorp R."/>
            <person name="Griffiths C."/>
            <person name="Manthravadi D."/>
            <person name="Nichol S."/>
            <person name="Barker G."/>
            <person name="Whitehead S."/>
            <person name="Kay M."/>
            <person name="Brown J."/>
            <person name="Murnane C."/>
            <person name="Gray E."/>
            <person name="Humphries M."/>
            <person name="Sycamore N."/>
            <person name="Barker D."/>
            <person name="Saunders D."/>
            <person name="Wallis J."/>
            <person name="Babbage A."/>
            <person name="Hammond S."/>
            <person name="Mashreghi-Mohammadi M."/>
            <person name="Barr L."/>
            <person name="Martin S."/>
            <person name="Wray P."/>
            <person name="Ellington A."/>
            <person name="Matthews N."/>
            <person name="Ellwood M."/>
            <person name="Woodmansey R."/>
            <person name="Clark G."/>
            <person name="Cooper J."/>
            <person name="Tromans A."/>
            <person name="Grafham D."/>
            <person name="Skuce C."/>
            <person name="Pandian R."/>
            <person name="Andrews R."/>
            <person name="Harrison E."/>
            <person name="Kimberley A."/>
            <person name="Garnett J."/>
            <person name="Fosker N."/>
            <person name="Hall R."/>
            <person name="Garner P."/>
            <person name="Kelly D."/>
            <person name="Bird C."/>
            <person name="Palmer S."/>
            <person name="Gehring I."/>
            <person name="Berger A."/>
            <person name="Dooley C.M."/>
            <person name="Ersan-Urun Z."/>
            <person name="Eser C."/>
            <person name="Geiger H."/>
            <person name="Geisler M."/>
            <person name="Karotki L."/>
            <person name="Kirn A."/>
            <person name="Konantz J."/>
            <person name="Konantz M."/>
            <person name="Oberlander M."/>
            <person name="Rudolph-Geiger S."/>
            <person name="Teucke M."/>
            <person name="Lanz C."/>
            <person name="Raddatz G."/>
            <person name="Osoegawa K."/>
            <person name="Zhu B."/>
            <person name="Rapp A."/>
            <person name="Widaa S."/>
            <person name="Langford C."/>
            <person name="Yang F."/>
            <person name="Schuster S.C."/>
            <person name="Carter N.P."/>
            <person name="Harrow J."/>
            <person name="Ning Z."/>
            <person name="Herrero J."/>
            <person name="Searle S.M."/>
            <person name="Enright A."/>
            <person name="Geisler R."/>
            <person name="Plasterk R.H."/>
            <person name="Lee C."/>
            <person name="Westerfield M."/>
            <person name="de Jong P.J."/>
            <person name="Zon L.I."/>
            <person name="Postlethwait J.H."/>
            <person name="Nusslein-Volhard C."/>
            <person name="Hubbard T.J."/>
            <person name="Roest Crollius H."/>
            <person name="Rogers J."/>
            <person name="Stemple D.L."/>
        </authorList>
    </citation>
    <scope>NUCLEOTIDE SEQUENCE [LARGE SCALE GENOMIC DNA]</scope>
    <source>
        <strain>Tuebingen</strain>
    </source>
</reference>
<comment type="function">
    <text evidence="1">Involved in epithelial cell integrity by acting on the maintenance of the actin cytoskeleton. Positively regulates the actin polymerization, by inhibiting the interaction of actin-capping proteins with actin.</text>
</comment>
<comment type="subunit">
    <text evidence="1">Directly interacts with actin-capping proteins; this interaction decreases the binding of capping proteins to actin.</text>
</comment>
<comment type="subcellular location">
    <subcellularLocation>
        <location evidence="1">Cytoplasm</location>
        <location evidence="1">Cytosol</location>
    </subcellularLocation>
</comment>
<comment type="sequence caution" evidence="3">
    <conflict type="erroneous initiation">
        <sequence resource="EMBL-CDS" id="CAI21314"/>
    </conflict>
</comment>
<proteinExistence type="inferred from homology"/>